<protein>
    <recommendedName>
        <fullName evidence="1">Phenylalanine--tRNA ligase beta subunit</fullName>
        <ecNumber evidence="1">6.1.1.20</ecNumber>
    </recommendedName>
    <alternativeName>
        <fullName evidence="1">Phenylalanyl-tRNA synthetase beta subunit</fullName>
        <shortName evidence="1">PheRS</shortName>
    </alternativeName>
</protein>
<evidence type="ECO:0000255" key="1">
    <source>
        <dbReference type="HAMAP-Rule" id="MF_00284"/>
    </source>
</evidence>
<dbReference type="EC" id="6.1.1.20" evidence="1"/>
<dbReference type="EMBL" id="CP000102">
    <property type="protein sequence ID" value="ABC56924.1"/>
    <property type="molecule type" value="Genomic_DNA"/>
</dbReference>
<dbReference type="RefSeq" id="WP_011406124.1">
    <property type="nucleotide sequence ID" value="NC_007681.1"/>
</dbReference>
<dbReference type="SMR" id="Q2NGX9"/>
<dbReference type="STRING" id="339860.Msp_0525"/>
<dbReference type="GeneID" id="41325099"/>
<dbReference type="KEGG" id="mst:Msp_0525"/>
<dbReference type="eggNOG" id="arCOG00412">
    <property type="taxonomic scope" value="Archaea"/>
</dbReference>
<dbReference type="HOGENOM" id="CLU_020279_3_0_2"/>
<dbReference type="OrthoDB" id="10073at2157"/>
<dbReference type="Proteomes" id="UP000001931">
    <property type="component" value="Chromosome"/>
</dbReference>
<dbReference type="GO" id="GO:0009328">
    <property type="term" value="C:phenylalanine-tRNA ligase complex"/>
    <property type="evidence" value="ECO:0007669"/>
    <property type="project" value="TreeGrafter"/>
</dbReference>
<dbReference type="GO" id="GO:0005524">
    <property type="term" value="F:ATP binding"/>
    <property type="evidence" value="ECO:0007669"/>
    <property type="project" value="UniProtKB-UniRule"/>
</dbReference>
<dbReference type="GO" id="GO:0000287">
    <property type="term" value="F:magnesium ion binding"/>
    <property type="evidence" value="ECO:0007669"/>
    <property type="project" value="InterPro"/>
</dbReference>
<dbReference type="GO" id="GO:0004826">
    <property type="term" value="F:phenylalanine-tRNA ligase activity"/>
    <property type="evidence" value="ECO:0007669"/>
    <property type="project" value="UniProtKB-UniRule"/>
</dbReference>
<dbReference type="GO" id="GO:0003723">
    <property type="term" value="F:RNA binding"/>
    <property type="evidence" value="ECO:0007669"/>
    <property type="project" value="InterPro"/>
</dbReference>
<dbReference type="GO" id="GO:0006432">
    <property type="term" value="P:phenylalanyl-tRNA aminoacylation"/>
    <property type="evidence" value="ECO:0007669"/>
    <property type="project" value="UniProtKB-UniRule"/>
</dbReference>
<dbReference type="FunFam" id="3.50.40.10:FF:000003">
    <property type="entry name" value="Phenylalanine--tRNA ligase beta subunit"/>
    <property type="match status" value="1"/>
</dbReference>
<dbReference type="Gene3D" id="3.30.56.10">
    <property type="match status" value="2"/>
</dbReference>
<dbReference type="Gene3D" id="3.30.930.10">
    <property type="entry name" value="Bira Bifunctional Protein, Domain 2"/>
    <property type="match status" value="1"/>
</dbReference>
<dbReference type="Gene3D" id="3.50.40.10">
    <property type="entry name" value="Phenylalanyl-trna Synthetase, Chain B, domain 3"/>
    <property type="match status" value="1"/>
</dbReference>
<dbReference type="HAMAP" id="MF_00284">
    <property type="entry name" value="Phe_tRNA_synth_beta2"/>
    <property type="match status" value="1"/>
</dbReference>
<dbReference type="InterPro" id="IPR045864">
    <property type="entry name" value="aa-tRNA-synth_II/BPL/LPL"/>
</dbReference>
<dbReference type="InterPro" id="IPR005146">
    <property type="entry name" value="B3/B4_tRNA-bd"/>
</dbReference>
<dbReference type="InterPro" id="IPR009061">
    <property type="entry name" value="DNA-bd_dom_put_sf"/>
</dbReference>
<dbReference type="InterPro" id="IPR045060">
    <property type="entry name" value="Phe-tRNA-ligase_IIc_bsu"/>
</dbReference>
<dbReference type="InterPro" id="IPR004531">
    <property type="entry name" value="Phe-tRNA-synth_IIc_bsu_arc_euk"/>
</dbReference>
<dbReference type="InterPro" id="IPR020825">
    <property type="entry name" value="Phe-tRNA_synthase-like_B3/B4"/>
</dbReference>
<dbReference type="InterPro" id="IPR022918">
    <property type="entry name" value="Phe_tRNA_ligase_beta2_arc"/>
</dbReference>
<dbReference type="InterPro" id="IPR041616">
    <property type="entry name" value="PheRS_beta_core"/>
</dbReference>
<dbReference type="InterPro" id="IPR005147">
    <property type="entry name" value="tRNA_synthase_B5-dom"/>
</dbReference>
<dbReference type="NCBIfam" id="TIGR00471">
    <property type="entry name" value="pheT_arch"/>
    <property type="match status" value="1"/>
</dbReference>
<dbReference type="PANTHER" id="PTHR10947:SF0">
    <property type="entry name" value="PHENYLALANINE--TRNA LIGASE BETA SUBUNIT"/>
    <property type="match status" value="1"/>
</dbReference>
<dbReference type="PANTHER" id="PTHR10947">
    <property type="entry name" value="PHENYLALANYL-TRNA SYNTHETASE BETA CHAIN AND LEUCINE-RICH REPEAT-CONTAINING PROTEIN 47"/>
    <property type="match status" value="1"/>
</dbReference>
<dbReference type="Pfam" id="PF03483">
    <property type="entry name" value="B3_4"/>
    <property type="match status" value="1"/>
</dbReference>
<dbReference type="Pfam" id="PF03484">
    <property type="entry name" value="B5"/>
    <property type="match status" value="1"/>
</dbReference>
<dbReference type="Pfam" id="PF17759">
    <property type="entry name" value="tRNA_synthFbeta"/>
    <property type="match status" value="1"/>
</dbReference>
<dbReference type="SMART" id="SM00873">
    <property type="entry name" value="B3_4"/>
    <property type="match status" value="1"/>
</dbReference>
<dbReference type="SMART" id="SM00874">
    <property type="entry name" value="B5"/>
    <property type="match status" value="1"/>
</dbReference>
<dbReference type="SUPFAM" id="SSF55681">
    <property type="entry name" value="Class II aaRS and biotin synthetases"/>
    <property type="match status" value="1"/>
</dbReference>
<dbReference type="SUPFAM" id="SSF56037">
    <property type="entry name" value="PheT/TilS domain"/>
    <property type="match status" value="1"/>
</dbReference>
<dbReference type="SUPFAM" id="SSF46955">
    <property type="entry name" value="Putative DNA-binding domain"/>
    <property type="match status" value="2"/>
</dbReference>
<dbReference type="PROSITE" id="PS51483">
    <property type="entry name" value="B5"/>
    <property type="match status" value="1"/>
</dbReference>
<feature type="chain" id="PRO_1000022426" description="Phenylalanine--tRNA ligase beta subunit">
    <location>
        <begin position="1"/>
        <end position="559"/>
    </location>
</feature>
<feature type="domain" description="B5" evidence="1">
    <location>
        <begin position="274"/>
        <end position="350"/>
    </location>
</feature>
<feature type="binding site" evidence="1">
    <location>
        <position position="328"/>
    </location>
    <ligand>
        <name>Mg(2+)</name>
        <dbReference type="ChEBI" id="CHEBI:18420"/>
        <note>shared with alpha subunit</note>
    </ligand>
</feature>
<feature type="binding site" evidence="1">
    <location>
        <position position="334"/>
    </location>
    <ligand>
        <name>Mg(2+)</name>
        <dbReference type="ChEBI" id="CHEBI:18420"/>
        <note>shared with alpha subunit</note>
    </ligand>
</feature>
<feature type="binding site" evidence="1">
    <location>
        <position position="337"/>
    </location>
    <ligand>
        <name>Mg(2+)</name>
        <dbReference type="ChEBI" id="CHEBI:18420"/>
        <note>shared with alpha subunit</note>
    </ligand>
</feature>
<feature type="binding site" evidence="1">
    <location>
        <position position="338"/>
    </location>
    <ligand>
        <name>Mg(2+)</name>
        <dbReference type="ChEBI" id="CHEBI:18420"/>
        <note>shared with alpha subunit</note>
    </ligand>
</feature>
<reference key="1">
    <citation type="journal article" date="2006" name="J. Bacteriol.">
        <title>The genome sequence of Methanosphaera stadtmanae reveals why this human intestinal archaeon is restricted to methanol and H2 for methane formation and ATP synthesis.</title>
        <authorList>
            <person name="Fricke W.F."/>
            <person name="Seedorf H."/>
            <person name="Henne A."/>
            <person name="Kruer M."/>
            <person name="Liesegang H."/>
            <person name="Hedderich R."/>
            <person name="Gottschalk G."/>
            <person name="Thauer R.K."/>
        </authorList>
    </citation>
    <scope>NUCLEOTIDE SEQUENCE [LARGE SCALE GENOMIC DNA]</scope>
    <source>
        <strain>ATCC 43021 / DSM 3091 / JCM 11832 / MCB-3</strain>
    </source>
</reference>
<name>SYFB_METST</name>
<accession>Q2NGX9</accession>
<proteinExistence type="inferred from homology"/>
<sequence>MPVINFTYEELFEQLGEELPKDELINILPMISSDVESYDDVEVKAEFFPNRPDYYSVEGIVRSLKGYLELEKGIPEYDVKKTDTTITVDSELENIRPYVACCMIKNVKIDDNQLRNIMEFQEHLHWVIGRDRKKVAIGIHDLDKVEGPFYYKAGNPNETSFIPLESRENLTLNEILENHEKGEKYAKLLKEFDKYPLIVDGNGNIMSMPPIINSELTKLTTKTTNLFIDVTGTDINAVTNALNIIAANLSENGATIETIEVNYPYHDNKTYPDFEPKIIDVHTKTAQEYIGIDLTADKIVETLEKTRFNATKINEETVRVTVPRYRIDILHEVDIIENIALGYGFNELPAQLPDFATVANPDSKRQFDQILEQVMIGLSFTEIKSLMLTSETQHYTKLRKEVEEDRVTVAQPITQDRTMIRKSLINSLLEFLEDNKHEELPQKIFEIGDVAYINENAETKMVTVKKLAAAQISSVANFTTIKSIVESFVANMGFEMELEDHDDSAFIKGRCAKFTTKPLNKNTPFTFKGYFGEIHPEVLTNFELEYPVIAFEVEFSEVE</sequence>
<keyword id="KW-0030">Aminoacyl-tRNA synthetase</keyword>
<keyword id="KW-0067">ATP-binding</keyword>
<keyword id="KW-0963">Cytoplasm</keyword>
<keyword id="KW-0436">Ligase</keyword>
<keyword id="KW-0460">Magnesium</keyword>
<keyword id="KW-0479">Metal-binding</keyword>
<keyword id="KW-0547">Nucleotide-binding</keyword>
<keyword id="KW-0648">Protein biosynthesis</keyword>
<keyword id="KW-1185">Reference proteome</keyword>
<organism>
    <name type="scientific">Methanosphaera stadtmanae (strain ATCC 43021 / DSM 3091 / JCM 11832 / MCB-3)</name>
    <dbReference type="NCBI Taxonomy" id="339860"/>
    <lineage>
        <taxon>Archaea</taxon>
        <taxon>Methanobacteriati</taxon>
        <taxon>Methanobacteriota</taxon>
        <taxon>Methanomada group</taxon>
        <taxon>Methanobacteria</taxon>
        <taxon>Methanobacteriales</taxon>
        <taxon>Methanobacteriaceae</taxon>
        <taxon>Methanosphaera</taxon>
    </lineage>
</organism>
<comment type="catalytic activity">
    <reaction evidence="1">
        <text>tRNA(Phe) + L-phenylalanine + ATP = L-phenylalanyl-tRNA(Phe) + AMP + diphosphate + H(+)</text>
        <dbReference type="Rhea" id="RHEA:19413"/>
        <dbReference type="Rhea" id="RHEA-COMP:9668"/>
        <dbReference type="Rhea" id="RHEA-COMP:9699"/>
        <dbReference type="ChEBI" id="CHEBI:15378"/>
        <dbReference type="ChEBI" id="CHEBI:30616"/>
        <dbReference type="ChEBI" id="CHEBI:33019"/>
        <dbReference type="ChEBI" id="CHEBI:58095"/>
        <dbReference type="ChEBI" id="CHEBI:78442"/>
        <dbReference type="ChEBI" id="CHEBI:78531"/>
        <dbReference type="ChEBI" id="CHEBI:456215"/>
        <dbReference type="EC" id="6.1.1.20"/>
    </reaction>
</comment>
<comment type="cofactor">
    <cofactor evidence="1">
        <name>Mg(2+)</name>
        <dbReference type="ChEBI" id="CHEBI:18420"/>
    </cofactor>
</comment>
<comment type="subunit">
    <text evidence="1">Tetramer of two alpha and two beta subunits.</text>
</comment>
<comment type="subcellular location">
    <subcellularLocation>
        <location evidence="1">Cytoplasm</location>
    </subcellularLocation>
</comment>
<comment type="similarity">
    <text evidence="1">Belongs to the phenylalanyl-tRNA synthetase beta subunit family. Type 2 subfamily.</text>
</comment>
<gene>
    <name evidence="1" type="primary">pheT</name>
    <name type="ordered locus">Msp_0525</name>
</gene>